<keyword id="KW-1003">Cell membrane</keyword>
<keyword id="KW-1015">Disulfide bond</keyword>
<keyword id="KW-0325">Glycoprotein</keyword>
<keyword id="KW-0336">GPI-anchor</keyword>
<keyword id="KW-0449">Lipoprotein</keyword>
<keyword id="KW-0472">Membrane</keyword>
<keyword id="KW-1185">Reference proteome</keyword>
<keyword id="KW-0732">Signal</keyword>
<evidence type="ECO:0000250" key="1"/>
<evidence type="ECO:0000250" key="2">
    <source>
        <dbReference type="UniProtKB" id="Q64253"/>
    </source>
</evidence>
<evidence type="ECO:0000255" key="3"/>
<gene>
    <name type="primary">LY6E</name>
    <name type="synonym">SCA2</name>
</gene>
<protein>
    <recommendedName>
        <fullName>Lymphocyte antigen 6E</fullName>
        <shortName>Ly-6E</shortName>
    </recommendedName>
    <alternativeName>
        <fullName>Stem cell antigen 2</fullName>
        <shortName>SCA-2</shortName>
    </alternativeName>
</protein>
<reference key="1">
    <citation type="journal article" date="1997" name="Oncogene">
        <title>Characterization of changes in gene expression associated with malignant transformation by the NF-kappaB family member, v-Rel.</title>
        <authorList>
            <person name="Petrenko O."/>
            <person name="Ischenko I."/>
            <person name="Enrietto P.J."/>
        </authorList>
    </citation>
    <scope>NUCLEOTIDE SEQUENCE [MRNA]</scope>
    <source>
        <tissue>Bone marrow</tissue>
    </source>
</reference>
<organism>
    <name type="scientific">Gallus gallus</name>
    <name type="common">Chicken</name>
    <dbReference type="NCBI Taxonomy" id="9031"/>
    <lineage>
        <taxon>Eukaryota</taxon>
        <taxon>Metazoa</taxon>
        <taxon>Chordata</taxon>
        <taxon>Craniata</taxon>
        <taxon>Vertebrata</taxon>
        <taxon>Euteleostomi</taxon>
        <taxon>Archelosauria</taxon>
        <taxon>Archosauria</taxon>
        <taxon>Dinosauria</taxon>
        <taxon>Saurischia</taxon>
        <taxon>Theropoda</taxon>
        <taxon>Coelurosauria</taxon>
        <taxon>Aves</taxon>
        <taxon>Neognathae</taxon>
        <taxon>Galloanserae</taxon>
        <taxon>Galliformes</taxon>
        <taxon>Phasianidae</taxon>
        <taxon>Phasianinae</taxon>
        <taxon>Gallus</taxon>
    </lineage>
</organism>
<name>LY6E_CHICK</name>
<proteinExistence type="evidence at transcript level"/>
<comment type="subcellular location">
    <subcellularLocation>
        <location evidence="2">Cell membrane</location>
        <topology evidence="2">Lipid-anchor</topology>
        <topology evidence="2">GPI-anchor</topology>
    </subcellularLocation>
</comment>
<comment type="tissue specificity">
    <text>Expressed by thymic blast cells.</text>
</comment>
<sequence>MKAFLFAVLAAVLCVERAHTLICFSCSDASSNWACLTPVKCAENEEHCVTTYVGVGIGGKSGQSISKGCSPVCPSAGINLGIAAASVYCCDSFLCNISGSSSVKASYAVLALGILVSFVYVLRARE</sequence>
<dbReference type="EMBL" id="L34554">
    <property type="protein sequence ID" value="AAA49063.1"/>
    <property type="molecule type" value="mRNA"/>
</dbReference>
<dbReference type="RefSeq" id="NP_990106.1">
    <property type="nucleotide sequence ID" value="NM_204775.1"/>
</dbReference>
<dbReference type="SMR" id="Q90986"/>
<dbReference type="STRING" id="9031.ENSGALP00000048628"/>
<dbReference type="GlyCosmos" id="Q90986">
    <property type="glycosylation" value="1 site, No reported glycans"/>
</dbReference>
<dbReference type="GlyGen" id="Q90986">
    <property type="glycosylation" value="1 site"/>
</dbReference>
<dbReference type="PaxDb" id="9031-ENSGALP00000025978"/>
<dbReference type="GeneID" id="395550"/>
<dbReference type="KEGG" id="gga:395550"/>
<dbReference type="CTD" id="4061"/>
<dbReference type="VEuPathDB" id="HostDB:geneid_395550"/>
<dbReference type="eggNOG" id="ENOG502SRPS">
    <property type="taxonomic scope" value="Eukaryota"/>
</dbReference>
<dbReference type="InParanoid" id="Q90986"/>
<dbReference type="OrthoDB" id="10002433at2759"/>
<dbReference type="PhylomeDB" id="Q90986"/>
<dbReference type="PRO" id="PR:Q90986"/>
<dbReference type="Proteomes" id="UP000000539">
    <property type="component" value="Unassembled WGS sequence"/>
</dbReference>
<dbReference type="GO" id="GO:0009986">
    <property type="term" value="C:cell surface"/>
    <property type="evidence" value="ECO:0000314"/>
    <property type="project" value="AgBase"/>
</dbReference>
<dbReference type="GO" id="GO:0016020">
    <property type="term" value="C:membrane"/>
    <property type="evidence" value="ECO:0000314"/>
    <property type="project" value="AgBase"/>
</dbReference>
<dbReference type="GO" id="GO:0005886">
    <property type="term" value="C:plasma membrane"/>
    <property type="evidence" value="ECO:0000318"/>
    <property type="project" value="GO_Central"/>
</dbReference>
<dbReference type="GO" id="GO:0098552">
    <property type="term" value="C:side of membrane"/>
    <property type="evidence" value="ECO:0007669"/>
    <property type="project" value="UniProtKB-KW"/>
</dbReference>
<dbReference type="GO" id="GO:0002320">
    <property type="term" value="P:lymphoid progenitor cell differentiation"/>
    <property type="evidence" value="ECO:0000304"/>
    <property type="project" value="AgBase"/>
</dbReference>
<dbReference type="CDD" id="cd23543">
    <property type="entry name" value="TFP_LU_ECD_Ly6E"/>
    <property type="match status" value="1"/>
</dbReference>
<dbReference type="FunFam" id="2.10.60.10:FF:000003">
    <property type="entry name" value="lymphocyte antigen 6E isoform X1"/>
    <property type="match status" value="1"/>
</dbReference>
<dbReference type="Gene3D" id="2.10.60.10">
    <property type="entry name" value="CD59"/>
    <property type="match status" value="1"/>
</dbReference>
<dbReference type="InterPro" id="IPR051110">
    <property type="entry name" value="Ly-6/neurotoxin-like_GPI-ap"/>
</dbReference>
<dbReference type="InterPro" id="IPR016054">
    <property type="entry name" value="LY6_UPA_recep-like"/>
</dbReference>
<dbReference type="InterPro" id="IPR045860">
    <property type="entry name" value="Snake_toxin-like_sf"/>
</dbReference>
<dbReference type="InterPro" id="IPR035076">
    <property type="entry name" value="Toxin/TOLIP"/>
</dbReference>
<dbReference type="PANTHER" id="PTHR16983:SF30">
    <property type="entry name" value="LYMPHOCYTE ANTIGEN 6 COMPLEX, LOCUS E-RELATED"/>
    <property type="match status" value="1"/>
</dbReference>
<dbReference type="PANTHER" id="PTHR16983">
    <property type="entry name" value="UPAR/LY6 DOMAIN-CONTAINING PROTEIN"/>
    <property type="match status" value="1"/>
</dbReference>
<dbReference type="Pfam" id="PF00087">
    <property type="entry name" value="Toxin_TOLIP"/>
    <property type="match status" value="1"/>
</dbReference>
<dbReference type="SMART" id="SM00134">
    <property type="entry name" value="LU"/>
    <property type="match status" value="1"/>
</dbReference>
<dbReference type="SUPFAM" id="SSF57302">
    <property type="entry name" value="Snake toxin-like"/>
    <property type="match status" value="1"/>
</dbReference>
<accession>Q90986</accession>
<feature type="signal peptide" evidence="3">
    <location>
        <begin position="1"/>
        <end position="20"/>
    </location>
</feature>
<feature type="chain" id="PRO_0000036142" description="Lymphocyte antigen 6E">
    <location>
        <begin position="21"/>
        <end position="98" status="uncertain"/>
    </location>
</feature>
<feature type="propeptide" id="PRO_0000036143" description="Removed in mature form" evidence="1">
    <location>
        <begin position="99" status="uncertain"/>
        <end position="126"/>
    </location>
</feature>
<feature type="domain" description="UPAR/Ly6">
    <location>
        <begin position="21"/>
        <end position="98"/>
    </location>
</feature>
<feature type="lipid moiety-binding region" description="GPI-anchor amidated serine" evidence="3">
    <location>
        <position position="98"/>
    </location>
</feature>
<feature type="glycosylation site" description="N-linked (GlcNAc...) asparagine" evidence="3">
    <location>
        <position position="96"/>
    </location>
</feature>
<feature type="disulfide bond" evidence="1">
    <location>
        <begin position="23"/>
        <end position="48"/>
    </location>
</feature>
<feature type="disulfide bond" evidence="1">
    <location>
        <begin position="26"/>
        <end position="35"/>
    </location>
</feature>
<feature type="disulfide bond" evidence="1">
    <location>
        <begin position="41"/>
        <end position="69"/>
    </location>
</feature>
<feature type="disulfide bond" evidence="1">
    <location>
        <begin position="73"/>
        <end position="89"/>
    </location>
</feature>
<feature type="disulfide bond" evidence="1">
    <location>
        <begin position="90"/>
        <end position="95"/>
    </location>
</feature>